<dbReference type="EMBL" id="FR796436">
    <property type="protein sequence ID" value="CAM65151.2"/>
    <property type="status" value="ALT_INIT"/>
    <property type="molecule type" value="Genomic_DNA"/>
</dbReference>
<dbReference type="RefSeq" id="XP_001462964.2">
    <property type="nucleotide sequence ID" value="XM_001462927.2"/>
</dbReference>
<dbReference type="SMR" id="A4HS78"/>
<dbReference type="FunCoup" id="A4HS78">
    <property type="interactions" value="488"/>
</dbReference>
<dbReference type="STRING" id="5671.A4HS78"/>
<dbReference type="GeneID" id="5066335"/>
<dbReference type="KEGG" id="lif:LINJ_04_0810"/>
<dbReference type="VEuPathDB" id="TriTrypDB:LINF_040013100"/>
<dbReference type="eggNOG" id="KOG2481">
    <property type="taxonomic scope" value="Eukaryota"/>
</dbReference>
<dbReference type="InParanoid" id="A4HS78"/>
<dbReference type="OMA" id="QKVTWIV"/>
<dbReference type="Proteomes" id="UP000008153">
    <property type="component" value="Chromosome 4"/>
</dbReference>
<dbReference type="GO" id="GO:0005654">
    <property type="term" value="C:nucleoplasm"/>
    <property type="evidence" value="ECO:0007669"/>
    <property type="project" value="UniProtKB-SubCell"/>
</dbReference>
<dbReference type="GO" id="GO:0070545">
    <property type="term" value="C:PeBoW complex"/>
    <property type="evidence" value="ECO:0007669"/>
    <property type="project" value="TreeGrafter"/>
</dbReference>
<dbReference type="GO" id="GO:0030687">
    <property type="term" value="C:preribosome, large subunit precursor"/>
    <property type="evidence" value="ECO:0007669"/>
    <property type="project" value="UniProtKB-UniRule"/>
</dbReference>
<dbReference type="GO" id="GO:0043021">
    <property type="term" value="F:ribonucleoprotein complex binding"/>
    <property type="evidence" value="ECO:0007669"/>
    <property type="project" value="UniProtKB-UniRule"/>
</dbReference>
<dbReference type="GO" id="GO:0003723">
    <property type="term" value="F:RNA binding"/>
    <property type="evidence" value="ECO:0007669"/>
    <property type="project" value="TreeGrafter"/>
</dbReference>
<dbReference type="GO" id="GO:0000466">
    <property type="term" value="P:maturation of 5.8S rRNA from tricistronic rRNA transcript (SSU-rRNA, 5.8S rRNA, LSU-rRNA)"/>
    <property type="evidence" value="ECO:0007669"/>
    <property type="project" value="UniProtKB-UniRule"/>
</dbReference>
<dbReference type="GO" id="GO:0000463">
    <property type="term" value="P:maturation of LSU-rRNA from tricistronic rRNA transcript (SSU-rRNA, 5.8S rRNA, LSU-rRNA)"/>
    <property type="evidence" value="ECO:0007669"/>
    <property type="project" value="UniProtKB-UniRule"/>
</dbReference>
<dbReference type="CDD" id="cd17709">
    <property type="entry name" value="BRCT_pescadillo_like"/>
    <property type="match status" value="1"/>
</dbReference>
<dbReference type="FunFam" id="3.40.50.10190:FF:000108">
    <property type="entry name" value="Pescadillo homolog"/>
    <property type="match status" value="1"/>
</dbReference>
<dbReference type="Gene3D" id="3.40.50.10190">
    <property type="entry name" value="BRCT domain"/>
    <property type="match status" value="1"/>
</dbReference>
<dbReference type="HAMAP" id="MF_03028">
    <property type="entry name" value="Pescadillo"/>
    <property type="match status" value="1"/>
</dbReference>
<dbReference type="InterPro" id="IPR001357">
    <property type="entry name" value="BRCT_dom"/>
</dbReference>
<dbReference type="InterPro" id="IPR036420">
    <property type="entry name" value="BRCT_dom_sf"/>
</dbReference>
<dbReference type="InterPro" id="IPR010613">
    <property type="entry name" value="PES"/>
</dbReference>
<dbReference type="PANTHER" id="PTHR12221">
    <property type="entry name" value="PESCADILLO - RELATED"/>
    <property type="match status" value="1"/>
</dbReference>
<dbReference type="PANTHER" id="PTHR12221:SF6">
    <property type="entry name" value="PESCADILLO HOMOLOG"/>
    <property type="match status" value="1"/>
</dbReference>
<dbReference type="Pfam" id="PF16589">
    <property type="entry name" value="BRCT_2"/>
    <property type="match status" value="1"/>
</dbReference>
<dbReference type="Pfam" id="PF06732">
    <property type="entry name" value="Pescadillo_N"/>
    <property type="match status" value="1"/>
</dbReference>
<dbReference type="SMART" id="SM00292">
    <property type="entry name" value="BRCT"/>
    <property type="match status" value="1"/>
</dbReference>
<dbReference type="SUPFAM" id="SSF52113">
    <property type="entry name" value="BRCT domain"/>
    <property type="match status" value="1"/>
</dbReference>
<dbReference type="PROSITE" id="PS50172">
    <property type="entry name" value="BRCT"/>
    <property type="match status" value="1"/>
</dbReference>
<reference key="1">
    <citation type="journal article" date="2007" name="Nat. Genet.">
        <title>Comparative genomic analysis of three Leishmania species that cause diverse human disease.</title>
        <authorList>
            <person name="Peacock C.S."/>
            <person name="Seeger K."/>
            <person name="Harris D."/>
            <person name="Murphy L."/>
            <person name="Ruiz J.C."/>
            <person name="Quail M.A."/>
            <person name="Peters N."/>
            <person name="Adlem E."/>
            <person name="Tivey A."/>
            <person name="Aslett M."/>
            <person name="Kerhornou A."/>
            <person name="Ivens A."/>
            <person name="Fraser A."/>
            <person name="Rajandream M.-A."/>
            <person name="Carver T."/>
            <person name="Norbertczak H."/>
            <person name="Chillingworth T."/>
            <person name="Hance Z."/>
            <person name="Jagels K."/>
            <person name="Moule S."/>
            <person name="Ormond D."/>
            <person name="Rutter S."/>
            <person name="Sqaures R."/>
            <person name="Whitehead S."/>
            <person name="Rabbinowitsch E."/>
            <person name="Arrowsmith C."/>
            <person name="White B."/>
            <person name="Thurston S."/>
            <person name="Bringaud F."/>
            <person name="Baldauf S.L."/>
            <person name="Faulconbridge A."/>
            <person name="Jeffares D."/>
            <person name="Depledge D.P."/>
            <person name="Oyola S.O."/>
            <person name="Hilley J.D."/>
            <person name="Brito L.O."/>
            <person name="Tosi L.R.O."/>
            <person name="Barrell B."/>
            <person name="Cruz A.K."/>
            <person name="Mottram J.C."/>
            <person name="Smith D.F."/>
            <person name="Berriman M."/>
        </authorList>
    </citation>
    <scope>NUCLEOTIDE SEQUENCE [LARGE SCALE GENOMIC DNA]</scope>
    <source>
        <strain>JPCM5</strain>
    </source>
</reference>
<protein>
    <recommendedName>
        <fullName evidence="1">Pescadillo homolog</fullName>
    </recommendedName>
</protein>
<sequence>MAHKKQAWAKRVKKERFKKKFLTRMQATRLLQMESVQFRRLCILKGIYPRALNRSKQKQSGHEKQYYLAREIKWLVRDQIAEKMMAYRAWEKKVKRAEAMGRSEDLKVLQSSRVKPRHSLVATIKERYPYFIDAIRDVDDAMSMIHLYAFLSPEIKSDTTIEIHHSLTSGMSEKAKEVCERWDRYVARARVLTKGFISIKGYYYEAIVKGERVRWLCPHEYAHRFPPGIQQYVMLSFLEFYLEMMKFVLFKLESDLARDEADRLAAEDEEGVTRANAEDFANGGALAVLDVGANGAQAKEVKEAESKRSLMGEELHKVRELFRGLTFFISREVPSKRFALVINACGGRVATDYVPSNITHVVVDRPALPPGMKKHDQLEYVQPQYIFDCLNARLMLPVTGYRIGEELPPHVSPFSVSITNSAEDNAAVEQVKKDHPRIVGYVPARVHEIRKLINPSYSAVDPEGKVAHLEGEYSDEESHVAVPEMDMEDDVSLSGDELAEARRKPAWQEEEVTEEVQRPKLSAFKVKKQREMNLMNAPTNEVVARRRQALRKAQEKSRQTETSEARLQRKMSEVKRQEAATRKMQLQVARKKAARFYKMISGVVQGTAKKAATLEAKAKHIAEGKLHKTEDGKGLVNTRLEARRQRAEAKSKKLKERKAGNPYKKLPKWVQ</sequence>
<feature type="chain" id="PRO_0000370471" description="Pescadillo homolog">
    <location>
        <begin position="1"/>
        <end position="671"/>
    </location>
</feature>
<feature type="domain" description="BRCT" evidence="1">
    <location>
        <begin position="317"/>
        <end position="403"/>
    </location>
</feature>
<feature type="region of interest" description="Disordered" evidence="2">
    <location>
        <begin position="552"/>
        <end position="578"/>
    </location>
</feature>
<feature type="region of interest" description="Disordered" evidence="2">
    <location>
        <begin position="643"/>
        <end position="671"/>
    </location>
</feature>
<feature type="coiled-coil region" evidence="1">
    <location>
        <begin position="548"/>
        <end position="584"/>
    </location>
</feature>
<keyword id="KW-0175">Coiled coil</keyword>
<keyword id="KW-0539">Nucleus</keyword>
<keyword id="KW-1185">Reference proteome</keyword>
<keyword id="KW-0690">Ribosome biogenesis</keyword>
<keyword id="KW-0698">rRNA processing</keyword>
<organism>
    <name type="scientific">Leishmania infantum</name>
    <dbReference type="NCBI Taxonomy" id="5671"/>
    <lineage>
        <taxon>Eukaryota</taxon>
        <taxon>Discoba</taxon>
        <taxon>Euglenozoa</taxon>
        <taxon>Kinetoplastea</taxon>
        <taxon>Metakinetoplastina</taxon>
        <taxon>Trypanosomatida</taxon>
        <taxon>Trypanosomatidae</taxon>
        <taxon>Leishmaniinae</taxon>
        <taxon>Leishmania</taxon>
    </lineage>
</organism>
<accession>A4HS78</accession>
<accession>A4HSC3</accession>
<name>PESC_LEIIN</name>
<evidence type="ECO:0000255" key="1">
    <source>
        <dbReference type="HAMAP-Rule" id="MF_03028"/>
    </source>
</evidence>
<evidence type="ECO:0000256" key="2">
    <source>
        <dbReference type="SAM" id="MobiDB-lite"/>
    </source>
</evidence>
<evidence type="ECO:0000305" key="3"/>
<gene>
    <name type="ORF">LINJ_04_0810</name>
</gene>
<comment type="function">
    <text evidence="1">Required for maturation of ribosomal RNAs and formation of the large ribosomal subunit.</text>
</comment>
<comment type="subcellular location">
    <subcellularLocation>
        <location evidence="1">Nucleus</location>
        <location evidence="1">Nucleolus</location>
    </subcellularLocation>
    <subcellularLocation>
        <location evidence="1">Nucleus</location>
        <location evidence="1">Nucleoplasm</location>
    </subcellularLocation>
</comment>
<comment type="similarity">
    <text evidence="1">Belongs to the pescadillo family.</text>
</comment>
<comment type="sequence caution" evidence="3">
    <conflict type="erroneous initiation">
        <sequence resource="EMBL-CDS" id="CAM65151"/>
    </conflict>
    <text>Truncated N-terminus.</text>
</comment>
<proteinExistence type="inferred from homology"/>